<evidence type="ECO:0000255" key="1">
    <source>
        <dbReference type="HAMAP-Rule" id="MF_01547"/>
    </source>
</evidence>
<feature type="chain" id="PRO_0000155568" description="Ribosomal RNA large subunit methyltransferase E">
    <location>
        <begin position="1"/>
        <end position="258"/>
    </location>
</feature>
<feature type="active site" description="Proton acceptor" evidence="1">
    <location>
        <position position="160"/>
    </location>
</feature>
<feature type="binding site" evidence="1">
    <location>
        <position position="58"/>
    </location>
    <ligand>
        <name>S-adenosyl-L-methionine</name>
        <dbReference type="ChEBI" id="CHEBI:59789"/>
    </ligand>
</feature>
<feature type="binding site" evidence="1">
    <location>
        <position position="60"/>
    </location>
    <ligand>
        <name>S-adenosyl-L-methionine</name>
        <dbReference type="ChEBI" id="CHEBI:59789"/>
    </ligand>
</feature>
<feature type="binding site" evidence="1">
    <location>
        <position position="78"/>
    </location>
    <ligand>
        <name>S-adenosyl-L-methionine</name>
        <dbReference type="ChEBI" id="CHEBI:59789"/>
    </ligand>
</feature>
<feature type="binding site" evidence="1">
    <location>
        <position position="96"/>
    </location>
    <ligand>
        <name>S-adenosyl-L-methionine</name>
        <dbReference type="ChEBI" id="CHEBI:59789"/>
    </ligand>
</feature>
<feature type="binding site" evidence="1">
    <location>
        <position position="120"/>
    </location>
    <ligand>
        <name>S-adenosyl-L-methionine</name>
        <dbReference type="ChEBI" id="CHEBI:59789"/>
    </ligand>
</feature>
<keyword id="KW-0963">Cytoplasm</keyword>
<keyword id="KW-0489">Methyltransferase</keyword>
<keyword id="KW-1185">Reference proteome</keyword>
<keyword id="KW-0698">rRNA processing</keyword>
<keyword id="KW-0949">S-adenosyl-L-methionine</keyword>
<keyword id="KW-0808">Transferase</keyword>
<comment type="function">
    <text evidence="1">Specifically methylates the uridine in position 2552 of 23S rRNA at the 2'-O position of the ribose in the fully assembled 50S ribosomal subunit.</text>
</comment>
<comment type="catalytic activity">
    <reaction evidence="1">
        <text>uridine(2552) in 23S rRNA + S-adenosyl-L-methionine = 2'-O-methyluridine(2552) in 23S rRNA + S-adenosyl-L-homocysteine + H(+)</text>
        <dbReference type="Rhea" id="RHEA:42720"/>
        <dbReference type="Rhea" id="RHEA-COMP:10202"/>
        <dbReference type="Rhea" id="RHEA-COMP:10203"/>
        <dbReference type="ChEBI" id="CHEBI:15378"/>
        <dbReference type="ChEBI" id="CHEBI:57856"/>
        <dbReference type="ChEBI" id="CHEBI:59789"/>
        <dbReference type="ChEBI" id="CHEBI:65315"/>
        <dbReference type="ChEBI" id="CHEBI:74478"/>
        <dbReference type="EC" id="2.1.1.166"/>
    </reaction>
</comment>
<comment type="subcellular location">
    <subcellularLocation>
        <location evidence="1">Cytoplasm</location>
    </subcellularLocation>
</comment>
<comment type="similarity">
    <text evidence="1">Belongs to the class I-like SAM-binding methyltransferase superfamily. RNA methyltransferase RlmE family.</text>
</comment>
<organism>
    <name type="scientific">Methanococcus maripaludis (strain DSM 14266 / JCM 13030 / NBRC 101832 / S2 / LL)</name>
    <dbReference type="NCBI Taxonomy" id="267377"/>
    <lineage>
        <taxon>Archaea</taxon>
        <taxon>Methanobacteriati</taxon>
        <taxon>Methanobacteriota</taxon>
        <taxon>Methanomada group</taxon>
        <taxon>Methanococci</taxon>
        <taxon>Methanococcales</taxon>
        <taxon>Methanococcaceae</taxon>
        <taxon>Methanococcus</taxon>
    </lineage>
</organism>
<gene>
    <name evidence="1" type="primary">rlmE</name>
    <name evidence="1" type="synonym">rrmJ</name>
    <name type="ordered locus">MMP0606</name>
</gene>
<accession>Q6LZL8</accession>
<dbReference type="EC" id="2.1.1.166" evidence="1"/>
<dbReference type="EMBL" id="BX950229">
    <property type="protein sequence ID" value="CAF30162.1"/>
    <property type="molecule type" value="Genomic_DNA"/>
</dbReference>
<dbReference type="RefSeq" id="WP_011170550.1">
    <property type="nucleotide sequence ID" value="NC_005791.1"/>
</dbReference>
<dbReference type="SMR" id="Q6LZL8"/>
<dbReference type="STRING" id="267377.MMP0606"/>
<dbReference type="EnsemblBacteria" id="CAF30162">
    <property type="protein sequence ID" value="CAF30162"/>
    <property type="gene ID" value="MMP0606"/>
</dbReference>
<dbReference type="GeneID" id="2761660"/>
<dbReference type="KEGG" id="mmp:MMP0606"/>
<dbReference type="PATRIC" id="fig|267377.15.peg.620"/>
<dbReference type="eggNOG" id="arCOG00079">
    <property type="taxonomic scope" value="Archaea"/>
</dbReference>
<dbReference type="HOGENOM" id="CLU_009422_4_4_2"/>
<dbReference type="OrthoDB" id="26307at2157"/>
<dbReference type="Proteomes" id="UP000000590">
    <property type="component" value="Chromosome"/>
</dbReference>
<dbReference type="GO" id="GO:0005737">
    <property type="term" value="C:cytoplasm"/>
    <property type="evidence" value="ECO:0007669"/>
    <property type="project" value="UniProtKB-SubCell"/>
</dbReference>
<dbReference type="GO" id="GO:0008650">
    <property type="term" value="F:rRNA (uridine-2'-O-)-methyltransferase activity"/>
    <property type="evidence" value="ECO:0007669"/>
    <property type="project" value="UniProtKB-UniRule"/>
</dbReference>
<dbReference type="Gene3D" id="3.40.50.150">
    <property type="entry name" value="Vaccinia Virus protein VP39"/>
    <property type="match status" value="1"/>
</dbReference>
<dbReference type="HAMAP" id="MF_01547">
    <property type="entry name" value="RNA_methyltr_E"/>
    <property type="match status" value="1"/>
</dbReference>
<dbReference type="InterPro" id="IPR050082">
    <property type="entry name" value="RNA_methyltr_RlmE"/>
</dbReference>
<dbReference type="InterPro" id="IPR002877">
    <property type="entry name" value="RNA_MeTrfase_FtsJ_dom"/>
</dbReference>
<dbReference type="InterPro" id="IPR015507">
    <property type="entry name" value="rRNA-MeTfrase_E"/>
</dbReference>
<dbReference type="InterPro" id="IPR029063">
    <property type="entry name" value="SAM-dependent_MTases_sf"/>
</dbReference>
<dbReference type="PANTHER" id="PTHR10920:SF13">
    <property type="entry name" value="PRE-RRNA 2'-O-RIBOSE RNA METHYLTRANSFERASE FTSJ3"/>
    <property type="match status" value="1"/>
</dbReference>
<dbReference type="PANTHER" id="PTHR10920">
    <property type="entry name" value="RIBOSOMAL RNA METHYLTRANSFERASE"/>
    <property type="match status" value="1"/>
</dbReference>
<dbReference type="Pfam" id="PF01728">
    <property type="entry name" value="FtsJ"/>
    <property type="match status" value="1"/>
</dbReference>
<dbReference type="PIRSF" id="PIRSF005461">
    <property type="entry name" value="23S_rRNA_mtase"/>
    <property type="match status" value="1"/>
</dbReference>
<dbReference type="SUPFAM" id="SSF53335">
    <property type="entry name" value="S-adenosyl-L-methionine-dependent methyltransferases"/>
    <property type="match status" value="1"/>
</dbReference>
<name>RLME_METMP</name>
<proteinExistence type="inferred from homology"/>
<reference key="1">
    <citation type="journal article" date="2004" name="J. Bacteriol.">
        <title>Complete genome sequence of the genetically tractable hydrogenotrophic methanogen Methanococcus maripaludis.</title>
        <authorList>
            <person name="Hendrickson E.L."/>
            <person name="Kaul R."/>
            <person name="Zhou Y."/>
            <person name="Bovee D."/>
            <person name="Chapman P."/>
            <person name="Chung J."/>
            <person name="Conway de Macario E."/>
            <person name="Dodsworth J.A."/>
            <person name="Gillett W."/>
            <person name="Graham D.E."/>
            <person name="Hackett M."/>
            <person name="Haydock A.K."/>
            <person name="Kang A."/>
            <person name="Land M.L."/>
            <person name="Levy R."/>
            <person name="Lie T.J."/>
            <person name="Major T.A."/>
            <person name="Moore B.C."/>
            <person name="Porat I."/>
            <person name="Palmeiri A."/>
            <person name="Rouse G."/>
            <person name="Saenphimmachak C."/>
            <person name="Soell D."/>
            <person name="Van Dien S."/>
            <person name="Wang T."/>
            <person name="Whitman W.B."/>
            <person name="Xia Q."/>
            <person name="Zhang Y."/>
            <person name="Larimer F.W."/>
            <person name="Olson M.V."/>
            <person name="Leigh J.A."/>
        </authorList>
    </citation>
    <scope>NUCLEOTIDE SEQUENCE [LARGE SCALE GENOMIC DNA]</scope>
    <source>
        <strain>DSM 14266 / JCM 13030 / NBRC 101832 / S2 / LL</strain>
    </source>
</reference>
<protein>
    <recommendedName>
        <fullName evidence="1">Ribosomal RNA large subunit methyltransferase E</fullName>
        <ecNumber evidence="1">2.1.1.166</ecNumber>
    </recommendedName>
    <alternativeName>
        <fullName evidence="1">23S rRNA Um2552 methyltransferase</fullName>
    </alternativeName>
    <alternativeName>
        <fullName evidence="1">rRNA (uridine-2'-O-)-methyltransferase</fullName>
    </alternativeName>
</protein>
<sequence>MGKKDKRWVLQRKNDHYYNLAKRRNYRSRATYKLFQLNEKFNLIKERNVVVDLGCAPGGWLQAARDIVGEDGFIVGIDLQTVKPLPHDNIIAIKGDMTKEEILKQAKDLLPEKPDVIICDASPNISGVWDVDHVRSLELTTMALMTATKMLKKGGNFVVKVFQGDLFEKYVQLVSEYFDKAFTTKPRASRDESAEVYVIGKRFNGKKFDMNSKSPIVKLLDTKPVEEEITSPSLRKEISKEDSGLMIKRIKEMRSKKE</sequence>